<sequence>MNSSLTAQRRGSDAELGPWVMAARSKDAAPSQRDGLLPVKVEEDSPGSWEPNYPAASPDPETSRLHFRQLRYQEVAGPEEALSRLRELCRRWLRPELLSKEQILELLVLEQFLTILPEELQAWVREHCPESGEEAVAVVRALQRALDGTSSQGMVTFEDTAVSLTWEEWERLDPARRDFCRESAQKDSGSTVPPSLESRVENKELIPMQQILEEAEPQGQLQEAFQGKRPLFSKCGSTHEDRVEKQSGDPLPLKLENSPEAEGLNSISDVNKNGSIEGEDSKNNELQNSARCSNLVLCQHIPKAERPTDSEEHGNKCKQSFHMVTWHVLKPHKSDSGDSFHHSSLFETQRQLHEERPYKCGNCGKSFKQRSDLFRHQRIHTGEKPYGCQECGKSFSQSAALTKHQRTHTGEKPYTCLKCGERFRQNSHLNRHQSTHSRDKHFKCEECGETCHISNLFRHQRLHKGERPYKCEECEKSFKQRSDLFKHHRIHTGEKPYGCSVCGKRFNQSATLIKHQRIHTGEKPYKCLECGERFRQSTHLIRHQRIHQNKVLSAGRGGSRL</sequence>
<dbReference type="EMBL" id="AY642122">
    <property type="protein sequence ID" value="AAT67053.1"/>
    <property type="molecule type" value="mRNA"/>
</dbReference>
<dbReference type="EMBL" id="AK022360">
    <property type="protein sequence ID" value="BAB14021.1"/>
    <property type="molecule type" value="mRNA"/>
</dbReference>
<dbReference type="EMBL" id="AK222948">
    <property type="protein sequence ID" value="BAD96668.1"/>
    <property type="molecule type" value="mRNA"/>
</dbReference>
<dbReference type="EMBL" id="AC073063">
    <property type="status" value="NOT_ANNOTATED_CDS"/>
    <property type="molecule type" value="Genomic_DNA"/>
</dbReference>
<dbReference type="EMBL" id="CH236956">
    <property type="protein sequence ID" value="EAL23874.1"/>
    <property type="molecule type" value="Genomic_DNA"/>
</dbReference>
<dbReference type="EMBL" id="CH471091">
    <property type="protein sequence ID" value="EAW76659.1"/>
    <property type="molecule type" value="Genomic_DNA"/>
</dbReference>
<dbReference type="EMBL" id="BC017051">
    <property type="protein sequence ID" value="AAH17051.1"/>
    <property type="molecule type" value="mRNA"/>
</dbReference>
<dbReference type="EMBL" id="BC025241">
    <property type="protein sequence ID" value="AAH25241.1"/>
    <property type="molecule type" value="mRNA"/>
</dbReference>
<dbReference type="EMBL" id="BC051847">
    <property type="protein sequence ID" value="AAH51847.1"/>
    <property type="molecule type" value="mRNA"/>
</dbReference>
<dbReference type="CCDS" id="CCDS5666.1">
    <molecule id="Q53GI3-1"/>
</dbReference>
<dbReference type="CCDS" id="CCDS87524.1">
    <molecule id="Q53GI3-3"/>
</dbReference>
<dbReference type="RefSeq" id="NP_001332896.1">
    <molecule id="Q53GI3-3"/>
    <property type="nucleotide sequence ID" value="NM_001345967.2"/>
</dbReference>
<dbReference type="RefSeq" id="NP_115540.2">
    <molecule id="Q53GI3-1"/>
    <property type="nucleotide sequence ID" value="NM_032164.3"/>
</dbReference>
<dbReference type="SMR" id="Q53GI3"/>
<dbReference type="BioGRID" id="123898">
    <property type="interactions" value="13"/>
</dbReference>
<dbReference type="FunCoup" id="Q53GI3">
    <property type="interactions" value="189"/>
</dbReference>
<dbReference type="IntAct" id="Q53GI3">
    <property type="interactions" value="10"/>
</dbReference>
<dbReference type="STRING" id="9606.ENSP00000499131"/>
<dbReference type="iPTMnet" id="Q53GI3"/>
<dbReference type="PhosphoSitePlus" id="Q53GI3"/>
<dbReference type="BioMuta" id="ZNF394"/>
<dbReference type="DMDM" id="81175102"/>
<dbReference type="jPOST" id="Q53GI3"/>
<dbReference type="MassIVE" id="Q53GI3"/>
<dbReference type="PaxDb" id="9606-ENSP00000337363"/>
<dbReference type="PeptideAtlas" id="Q53GI3"/>
<dbReference type="ProteomicsDB" id="62482">
    <molecule id="Q53GI3-1"/>
</dbReference>
<dbReference type="ABCD" id="Q53GI3">
    <property type="antibodies" value="4 sequenced antibodies"/>
</dbReference>
<dbReference type="Antibodypedia" id="16184">
    <property type="antibodies" value="231 antibodies from 25 providers"/>
</dbReference>
<dbReference type="DNASU" id="84124"/>
<dbReference type="Ensembl" id="ENST00000337673.7">
    <molecule id="Q53GI3-1"/>
    <property type="protein sequence ID" value="ENSP00000337363.6"/>
    <property type="gene ID" value="ENSG00000160908.15"/>
</dbReference>
<dbReference type="Ensembl" id="ENST00000426306.2">
    <molecule id="Q53GI3-3"/>
    <property type="protein sequence ID" value="ENSP00000409565.2"/>
    <property type="gene ID" value="ENSG00000160908.15"/>
</dbReference>
<dbReference type="Ensembl" id="ENST00000651061.1">
    <molecule id="Q53GI3-1"/>
    <property type="protein sequence ID" value="ENSP00000499131.1"/>
    <property type="gene ID" value="ENSG00000160908.15"/>
</dbReference>
<dbReference type="GeneID" id="84124"/>
<dbReference type="KEGG" id="hsa:84124"/>
<dbReference type="MANE-Select" id="ENST00000337673.7">
    <property type="protein sequence ID" value="ENSP00000337363.6"/>
    <property type="RefSeq nucleotide sequence ID" value="NM_032164.4"/>
    <property type="RefSeq protein sequence ID" value="NP_115540.2"/>
</dbReference>
<dbReference type="UCSC" id="uc003uqs.4">
    <molecule id="Q53GI3-1"/>
    <property type="organism name" value="human"/>
</dbReference>
<dbReference type="AGR" id="HGNC:18832"/>
<dbReference type="CTD" id="84124"/>
<dbReference type="DisGeNET" id="84124"/>
<dbReference type="GeneCards" id="ZNF394"/>
<dbReference type="HGNC" id="HGNC:18832">
    <property type="gene designation" value="ZNF394"/>
</dbReference>
<dbReference type="HPA" id="ENSG00000160908">
    <property type="expression patterns" value="Tissue enriched (bone)"/>
</dbReference>
<dbReference type="MIM" id="619300">
    <property type="type" value="gene"/>
</dbReference>
<dbReference type="neXtProt" id="NX_Q53GI3"/>
<dbReference type="OpenTargets" id="ENSG00000160908"/>
<dbReference type="PharmGKB" id="PA38702"/>
<dbReference type="VEuPathDB" id="HostDB:ENSG00000160908"/>
<dbReference type="eggNOG" id="KOG1721">
    <property type="taxonomic scope" value="Eukaryota"/>
</dbReference>
<dbReference type="GeneTree" id="ENSGT00940000162347"/>
<dbReference type="HOGENOM" id="CLU_002678_49_4_1"/>
<dbReference type="InParanoid" id="Q53GI3"/>
<dbReference type="OMA" id="ETCHISH"/>
<dbReference type="OrthoDB" id="6077919at2759"/>
<dbReference type="PAN-GO" id="Q53GI3">
    <property type="GO annotations" value="3 GO annotations based on evolutionary models"/>
</dbReference>
<dbReference type="PhylomeDB" id="Q53GI3"/>
<dbReference type="TreeFam" id="TF337913"/>
<dbReference type="PathwayCommons" id="Q53GI3"/>
<dbReference type="Reactome" id="R-HSA-212436">
    <property type="pathway name" value="Generic Transcription Pathway"/>
</dbReference>
<dbReference type="SignaLink" id="Q53GI3"/>
<dbReference type="BioGRID-ORCS" id="84124">
    <property type="hits" value="15 hits in 1177 CRISPR screens"/>
</dbReference>
<dbReference type="ChiTaRS" id="ZNF394">
    <property type="organism name" value="human"/>
</dbReference>
<dbReference type="GenomeRNAi" id="84124"/>
<dbReference type="Pharos" id="Q53GI3">
    <property type="development level" value="Tdark"/>
</dbReference>
<dbReference type="PRO" id="PR:Q53GI3"/>
<dbReference type="Proteomes" id="UP000005640">
    <property type="component" value="Chromosome 7"/>
</dbReference>
<dbReference type="RNAct" id="Q53GI3">
    <property type="molecule type" value="protein"/>
</dbReference>
<dbReference type="Bgee" id="ENSG00000160908">
    <property type="expression patterns" value="Expressed in mononuclear cell and 188 other cell types or tissues"/>
</dbReference>
<dbReference type="GO" id="GO:0005634">
    <property type="term" value="C:nucleus"/>
    <property type="evidence" value="ECO:0007669"/>
    <property type="project" value="UniProtKB-SubCell"/>
</dbReference>
<dbReference type="GO" id="GO:0000981">
    <property type="term" value="F:DNA-binding transcription factor activity, RNA polymerase II-specific"/>
    <property type="evidence" value="ECO:0000318"/>
    <property type="project" value="GO_Central"/>
</dbReference>
<dbReference type="GO" id="GO:0000978">
    <property type="term" value="F:RNA polymerase II cis-regulatory region sequence-specific DNA binding"/>
    <property type="evidence" value="ECO:0000318"/>
    <property type="project" value="GO_Central"/>
</dbReference>
<dbReference type="GO" id="GO:0008270">
    <property type="term" value="F:zinc ion binding"/>
    <property type="evidence" value="ECO:0007669"/>
    <property type="project" value="UniProtKB-KW"/>
</dbReference>
<dbReference type="GO" id="GO:0006357">
    <property type="term" value="P:regulation of transcription by RNA polymerase II"/>
    <property type="evidence" value="ECO:0000318"/>
    <property type="project" value="GO_Central"/>
</dbReference>
<dbReference type="CDD" id="cd07765">
    <property type="entry name" value="KRAB_A-box"/>
    <property type="match status" value="1"/>
</dbReference>
<dbReference type="CDD" id="cd07936">
    <property type="entry name" value="SCAN"/>
    <property type="match status" value="1"/>
</dbReference>
<dbReference type="FunFam" id="3.30.160.60:FF:000250">
    <property type="entry name" value="zinc finger protein 197 isoform X1"/>
    <property type="match status" value="2"/>
</dbReference>
<dbReference type="FunFam" id="3.30.160.60:FF:000512">
    <property type="entry name" value="zinc finger protein 197 isoform X1"/>
    <property type="match status" value="1"/>
</dbReference>
<dbReference type="FunFam" id="1.10.4020.10:FF:000001">
    <property type="entry name" value="zinc finger protein 263 isoform X1"/>
    <property type="match status" value="1"/>
</dbReference>
<dbReference type="FunFam" id="3.30.160.60:FF:002343">
    <property type="entry name" value="Zinc finger protein 33A"/>
    <property type="match status" value="1"/>
</dbReference>
<dbReference type="FunFam" id="3.30.160.60:FF:001234">
    <property type="entry name" value="Zinc finger protein 394"/>
    <property type="match status" value="2"/>
</dbReference>
<dbReference type="Gene3D" id="6.10.140.140">
    <property type="match status" value="1"/>
</dbReference>
<dbReference type="Gene3D" id="3.30.160.60">
    <property type="entry name" value="Classic Zinc Finger"/>
    <property type="match status" value="7"/>
</dbReference>
<dbReference type="Gene3D" id="1.10.4020.10">
    <property type="entry name" value="DNA breaking-rejoining enzymes"/>
    <property type="match status" value="1"/>
</dbReference>
<dbReference type="InterPro" id="IPR001909">
    <property type="entry name" value="KRAB"/>
</dbReference>
<dbReference type="InterPro" id="IPR036051">
    <property type="entry name" value="KRAB_dom_sf"/>
</dbReference>
<dbReference type="InterPro" id="IPR003309">
    <property type="entry name" value="SCAN_dom"/>
</dbReference>
<dbReference type="InterPro" id="IPR038269">
    <property type="entry name" value="SCAN_sf"/>
</dbReference>
<dbReference type="InterPro" id="IPR036236">
    <property type="entry name" value="Znf_C2H2_sf"/>
</dbReference>
<dbReference type="InterPro" id="IPR013087">
    <property type="entry name" value="Znf_C2H2_type"/>
</dbReference>
<dbReference type="PANTHER" id="PTHR23235:SF178">
    <property type="entry name" value="C2H2-TYPE DOMAIN-CONTAINING PROTEIN-RELATED"/>
    <property type="match status" value="1"/>
</dbReference>
<dbReference type="PANTHER" id="PTHR23235">
    <property type="entry name" value="KRUEPPEL-LIKE TRANSCRIPTION FACTOR"/>
    <property type="match status" value="1"/>
</dbReference>
<dbReference type="Pfam" id="PF01352">
    <property type="entry name" value="KRAB"/>
    <property type="match status" value="1"/>
</dbReference>
<dbReference type="Pfam" id="PF02023">
    <property type="entry name" value="SCAN"/>
    <property type="match status" value="1"/>
</dbReference>
<dbReference type="Pfam" id="PF00096">
    <property type="entry name" value="zf-C2H2"/>
    <property type="match status" value="6"/>
</dbReference>
<dbReference type="SMART" id="SM00349">
    <property type="entry name" value="KRAB"/>
    <property type="match status" value="1"/>
</dbReference>
<dbReference type="SMART" id="SM00431">
    <property type="entry name" value="SCAN"/>
    <property type="match status" value="1"/>
</dbReference>
<dbReference type="SMART" id="SM00355">
    <property type="entry name" value="ZnF_C2H2"/>
    <property type="match status" value="7"/>
</dbReference>
<dbReference type="SUPFAM" id="SSF57667">
    <property type="entry name" value="beta-beta-alpha zinc fingers"/>
    <property type="match status" value="4"/>
</dbReference>
<dbReference type="SUPFAM" id="SSF109640">
    <property type="entry name" value="KRAB domain (Kruppel-associated box)"/>
    <property type="match status" value="1"/>
</dbReference>
<dbReference type="SUPFAM" id="SSF47353">
    <property type="entry name" value="Retrovirus capsid dimerization domain-like"/>
    <property type="match status" value="1"/>
</dbReference>
<dbReference type="PROSITE" id="PS50805">
    <property type="entry name" value="KRAB"/>
    <property type="match status" value="1"/>
</dbReference>
<dbReference type="PROSITE" id="PS50804">
    <property type="entry name" value="SCAN_BOX"/>
    <property type="match status" value="1"/>
</dbReference>
<dbReference type="PROSITE" id="PS00028">
    <property type="entry name" value="ZINC_FINGER_C2H2_1"/>
    <property type="match status" value="6"/>
</dbReference>
<dbReference type="PROSITE" id="PS50157">
    <property type="entry name" value="ZINC_FINGER_C2H2_2"/>
    <property type="match status" value="7"/>
</dbReference>
<name>ZN394_HUMAN</name>
<organism>
    <name type="scientific">Homo sapiens</name>
    <name type="common">Human</name>
    <dbReference type="NCBI Taxonomy" id="9606"/>
    <lineage>
        <taxon>Eukaryota</taxon>
        <taxon>Metazoa</taxon>
        <taxon>Chordata</taxon>
        <taxon>Craniata</taxon>
        <taxon>Vertebrata</taxon>
        <taxon>Euteleostomi</taxon>
        <taxon>Mammalia</taxon>
        <taxon>Eutheria</taxon>
        <taxon>Euarchontoglires</taxon>
        <taxon>Primates</taxon>
        <taxon>Haplorrhini</taxon>
        <taxon>Catarrhini</taxon>
        <taxon>Hominidae</taxon>
        <taxon>Homo</taxon>
    </lineage>
</organism>
<keyword id="KW-0025">Alternative splicing</keyword>
<keyword id="KW-0238">DNA-binding</keyword>
<keyword id="KW-1017">Isopeptide bond</keyword>
<keyword id="KW-0479">Metal-binding</keyword>
<keyword id="KW-0539">Nucleus</keyword>
<keyword id="KW-0597">Phosphoprotein</keyword>
<keyword id="KW-1267">Proteomics identification</keyword>
<keyword id="KW-1185">Reference proteome</keyword>
<keyword id="KW-0677">Repeat</keyword>
<keyword id="KW-0804">Transcription</keyword>
<keyword id="KW-0805">Transcription regulation</keyword>
<keyword id="KW-0832">Ubl conjugation</keyword>
<keyword id="KW-0862">Zinc</keyword>
<keyword id="KW-0863">Zinc-finger</keyword>
<accession>Q53GI3</accession>
<accession>A4D281</accession>
<accession>Q05DA6</accession>
<accession>Q6P5X9</accession>
<accession>Q8TB27</accession>
<accession>Q9HA37</accession>
<accession>Q9UD51</accession>
<gene>
    <name type="primary">ZNF394</name>
    <name type="synonym">ZKSCAN14</name>
</gene>
<protein>
    <recommendedName>
        <fullName>Zinc finger protein 394</fullName>
    </recommendedName>
    <alternativeName>
        <fullName>Zinc finger protein with KRAB and SCAN domains 14</fullName>
    </alternativeName>
</protein>
<evidence type="ECO:0000255" key="1">
    <source>
        <dbReference type="PROSITE-ProRule" id="PRU00042"/>
    </source>
</evidence>
<evidence type="ECO:0000255" key="2">
    <source>
        <dbReference type="PROSITE-ProRule" id="PRU00119"/>
    </source>
</evidence>
<evidence type="ECO:0000255" key="3">
    <source>
        <dbReference type="PROSITE-ProRule" id="PRU00187"/>
    </source>
</evidence>
<evidence type="ECO:0000256" key="4">
    <source>
        <dbReference type="SAM" id="MobiDB-lite"/>
    </source>
</evidence>
<evidence type="ECO:0000303" key="5">
    <source>
    </source>
</evidence>
<evidence type="ECO:0000305" key="6"/>
<evidence type="ECO:0007744" key="7">
    <source>
    </source>
</evidence>
<evidence type="ECO:0007744" key="8">
    <source>
    </source>
</evidence>
<proteinExistence type="evidence at protein level"/>
<reference key="1">
    <citation type="journal article" date="2004" name="Biochem. Biophys. Res. Commun.">
        <title>Inhibition of transcriptional activities of AP-1 and c-Jun by a new zinc finger protein ZNF394.</title>
        <authorList>
            <person name="Huang C."/>
            <person name="Wang Y."/>
            <person name="Li D."/>
            <person name="Li Y."/>
            <person name="Luo J."/>
            <person name="Yuan W."/>
            <person name="Ou Y."/>
            <person name="Zhu C."/>
            <person name="Zhang Y."/>
            <person name="Wang Z."/>
            <person name="Liu M."/>
            <person name="Wu X."/>
        </authorList>
    </citation>
    <scope>NUCLEOTIDE SEQUENCE [MRNA] (ISOFORM 1)</scope>
</reference>
<reference key="2">
    <citation type="journal article" date="2004" name="Nat. Genet.">
        <title>Complete sequencing and characterization of 21,243 full-length human cDNAs.</title>
        <authorList>
            <person name="Ota T."/>
            <person name="Suzuki Y."/>
            <person name="Nishikawa T."/>
            <person name="Otsuki T."/>
            <person name="Sugiyama T."/>
            <person name="Irie R."/>
            <person name="Wakamatsu A."/>
            <person name="Hayashi K."/>
            <person name="Sato H."/>
            <person name="Nagai K."/>
            <person name="Kimura K."/>
            <person name="Makita H."/>
            <person name="Sekine M."/>
            <person name="Obayashi M."/>
            <person name="Nishi T."/>
            <person name="Shibahara T."/>
            <person name="Tanaka T."/>
            <person name="Ishii S."/>
            <person name="Yamamoto J."/>
            <person name="Saito K."/>
            <person name="Kawai Y."/>
            <person name="Isono Y."/>
            <person name="Nakamura Y."/>
            <person name="Nagahari K."/>
            <person name="Murakami K."/>
            <person name="Yasuda T."/>
            <person name="Iwayanagi T."/>
            <person name="Wagatsuma M."/>
            <person name="Shiratori A."/>
            <person name="Sudo H."/>
            <person name="Hosoiri T."/>
            <person name="Kaku Y."/>
            <person name="Kodaira H."/>
            <person name="Kondo H."/>
            <person name="Sugawara M."/>
            <person name="Takahashi M."/>
            <person name="Kanda K."/>
            <person name="Yokoi T."/>
            <person name="Furuya T."/>
            <person name="Kikkawa E."/>
            <person name="Omura Y."/>
            <person name="Abe K."/>
            <person name="Kamihara K."/>
            <person name="Katsuta N."/>
            <person name="Sato K."/>
            <person name="Tanikawa M."/>
            <person name="Yamazaki M."/>
            <person name="Ninomiya K."/>
            <person name="Ishibashi T."/>
            <person name="Yamashita H."/>
            <person name="Murakawa K."/>
            <person name="Fujimori K."/>
            <person name="Tanai H."/>
            <person name="Kimata M."/>
            <person name="Watanabe M."/>
            <person name="Hiraoka S."/>
            <person name="Chiba Y."/>
            <person name="Ishida S."/>
            <person name="Ono Y."/>
            <person name="Takiguchi S."/>
            <person name="Watanabe S."/>
            <person name="Yosida M."/>
            <person name="Hotuta T."/>
            <person name="Kusano J."/>
            <person name="Kanehori K."/>
            <person name="Takahashi-Fujii A."/>
            <person name="Hara H."/>
            <person name="Tanase T.-O."/>
            <person name="Nomura Y."/>
            <person name="Togiya S."/>
            <person name="Komai F."/>
            <person name="Hara R."/>
            <person name="Takeuchi K."/>
            <person name="Arita M."/>
            <person name="Imose N."/>
            <person name="Musashino K."/>
            <person name="Yuuki H."/>
            <person name="Oshima A."/>
            <person name="Sasaki N."/>
            <person name="Aotsuka S."/>
            <person name="Yoshikawa Y."/>
            <person name="Matsunawa H."/>
            <person name="Ichihara T."/>
            <person name="Shiohata N."/>
            <person name="Sano S."/>
            <person name="Moriya S."/>
            <person name="Momiyama H."/>
            <person name="Satoh N."/>
            <person name="Takami S."/>
            <person name="Terashima Y."/>
            <person name="Suzuki O."/>
            <person name="Nakagawa S."/>
            <person name="Senoh A."/>
            <person name="Mizoguchi H."/>
            <person name="Goto Y."/>
            <person name="Shimizu F."/>
            <person name="Wakebe H."/>
            <person name="Hishigaki H."/>
            <person name="Watanabe T."/>
            <person name="Sugiyama A."/>
            <person name="Takemoto M."/>
            <person name="Kawakami B."/>
            <person name="Yamazaki M."/>
            <person name="Watanabe K."/>
            <person name="Kumagai A."/>
            <person name="Itakura S."/>
            <person name="Fukuzumi Y."/>
            <person name="Fujimori Y."/>
            <person name="Komiyama M."/>
            <person name="Tashiro H."/>
            <person name="Tanigami A."/>
            <person name="Fujiwara T."/>
            <person name="Ono T."/>
            <person name="Yamada K."/>
            <person name="Fujii Y."/>
            <person name="Ozaki K."/>
            <person name="Hirao M."/>
            <person name="Ohmori Y."/>
            <person name="Kawabata A."/>
            <person name="Hikiji T."/>
            <person name="Kobatake N."/>
            <person name="Inagaki H."/>
            <person name="Ikema Y."/>
            <person name="Okamoto S."/>
            <person name="Okitani R."/>
            <person name="Kawakami T."/>
            <person name="Noguchi S."/>
            <person name="Itoh T."/>
            <person name="Shigeta K."/>
            <person name="Senba T."/>
            <person name="Matsumura K."/>
            <person name="Nakajima Y."/>
            <person name="Mizuno T."/>
            <person name="Morinaga M."/>
            <person name="Sasaki M."/>
            <person name="Togashi T."/>
            <person name="Oyama M."/>
            <person name="Hata H."/>
            <person name="Watanabe M."/>
            <person name="Komatsu T."/>
            <person name="Mizushima-Sugano J."/>
            <person name="Satoh T."/>
            <person name="Shirai Y."/>
            <person name="Takahashi Y."/>
            <person name="Nakagawa K."/>
            <person name="Okumura K."/>
            <person name="Nagase T."/>
            <person name="Nomura N."/>
            <person name="Kikuchi H."/>
            <person name="Masuho Y."/>
            <person name="Yamashita R."/>
            <person name="Nakai K."/>
            <person name="Yada T."/>
            <person name="Nakamura Y."/>
            <person name="Ohara O."/>
            <person name="Isogai T."/>
            <person name="Sugano S."/>
        </authorList>
    </citation>
    <scope>NUCLEOTIDE SEQUENCE [LARGE SCALE MRNA] (ISOFORM 1)</scope>
    <source>
        <tissue>Mammary gland</tissue>
    </source>
</reference>
<reference key="3">
    <citation type="submission" date="2005-04" db="EMBL/GenBank/DDBJ databases">
        <authorList>
            <person name="Suzuki Y."/>
            <person name="Sugano S."/>
            <person name="Totoki Y."/>
            <person name="Toyoda A."/>
            <person name="Takeda T."/>
            <person name="Sakaki Y."/>
            <person name="Tanaka A."/>
            <person name="Yokoyama S."/>
        </authorList>
    </citation>
    <scope>NUCLEOTIDE SEQUENCE [LARGE SCALE MRNA] (ISOFORM 1)</scope>
    <source>
        <tissue>Kidney</tissue>
    </source>
</reference>
<reference key="4">
    <citation type="journal article" date="2003" name="Nature">
        <title>The DNA sequence of human chromosome 7.</title>
        <authorList>
            <person name="Hillier L.W."/>
            <person name="Fulton R.S."/>
            <person name="Fulton L.A."/>
            <person name="Graves T.A."/>
            <person name="Pepin K.H."/>
            <person name="Wagner-McPherson C."/>
            <person name="Layman D."/>
            <person name="Maas J."/>
            <person name="Jaeger S."/>
            <person name="Walker R."/>
            <person name="Wylie K."/>
            <person name="Sekhon M."/>
            <person name="Becker M.C."/>
            <person name="O'Laughlin M.D."/>
            <person name="Schaller M.E."/>
            <person name="Fewell G.A."/>
            <person name="Delehaunty K.D."/>
            <person name="Miner T.L."/>
            <person name="Nash W.E."/>
            <person name="Cordes M."/>
            <person name="Du H."/>
            <person name="Sun H."/>
            <person name="Edwards J."/>
            <person name="Bradshaw-Cordum H."/>
            <person name="Ali J."/>
            <person name="Andrews S."/>
            <person name="Isak A."/>
            <person name="Vanbrunt A."/>
            <person name="Nguyen C."/>
            <person name="Du F."/>
            <person name="Lamar B."/>
            <person name="Courtney L."/>
            <person name="Kalicki J."/>
            <person name="Ozersky P."/>
            <person name="Bielicki L."/>
            <person name="Scott K."/>
            <person name="Holmes A."/>
            <person name="Harkins R."/>
            <person name="Harris A."/>
            <person name="Strong C.M."/>
            <person name="Hou S."/>
            <person name="Tomlinson C."/>
            <person name="Dauphin-Kohlberg S."/>
            <person name="Kozlowicz-Reilly A."/>
            <person name="Leonard S."/>
            <person name="Rohlfing T."/>
            <person name="Rock S.M."/>
            <person name="Tin-Wollam A.-M."/>
            <person name="Abbott A."/>
            <person name="Minx P."/>
            <person name="Maupin R."/>
            <person name="Strowmatt C."/>
            <person name="Latreille P."/>
            <person name="Miller N."/>
            <person name="Johnson D."/>
            <person name="Murray J."/>
            <person name="Woessner J.P."/>
            <person name="Wendl M.C."/>
            <person name="Yang S.-P."/>
            <person name="Schultz B.R."/>
            <person name="Wallis J.W."/>
            <person name="Spieth J."/>
            <person name="Bieri T.A."/>
            <person name="Nelson J.O."/>
            <person name="Berkowicz N."/>
            <person name="Wohldmann P.E."/>
            <person name="Cook L.L."/>
            <person name="Hickenbotham M.T."/>
            <person name="Eldred J."/>
            <person name="Williams D."/>
            <person name="Bedell J.A."/>
            <person name="Mardis E.R."/>
            <person name="Clifton S.W."/>
            <person name="Chissoe S.L."/>
            <person name="Marra M.A."/>
            <person name="Raymond C."/>
            <person name="Haugen E."/>
            <person name="Gillett W."/>
            <person name="Zhou Y."/>
            <person name="James R."/>
            <person name="Phelps K."/>
            <person name="Iadanoto S."/>
            <person name="Bubb K."/>
            <person name="Simms E."/>
            <person name="Levy R."/>
            <person name="Clendenning J."/>
            <person name="Kaul R."/>
            <person name="Kent W.J."/>
            <person name="Furey T.S."/>
            <person name="Baertsch R.A."/>
            <person name="Brent M.R."/>
            <person name="Keibler E."/>
            <person name="Flicek P."/>
            <person name="Bork P."/>
            <person name="Suyama M."/>
            <person name="Bailey J.A."/>
            <person name="Portnoy M.E."/>
            <person name="Torrents D."/>
            <person name="Chinwalla A.T."/>
            <person name="Gish W.R."/>
            <person name="Eddy S.R."/>
            <person name="McPherson J.D."/>
            <person name="Olson M.V."/>
            <person name="Eichler E.E."/>
            <person name="Green E.D."/>
            <person name="Waterston R.H."/>
            <person name="Wilson R.K."/>
        </authorList>
    </citation>
    <scope>NUCLEOTIDE SEQUENCE [LARGE SCALE GENOMIC DNA]</scope>
</reference>
<reference key="5">
    <citation type="journal article" date="2003" name="Science">
        <title>Human chromosome 7: DNA sequence and biology.</title>
        <authorList>
            <person name="Scherer S.W."/>
            <person name="Cheung J."/>
            <person name="MacDonald J.R."/>
            <person name="Osborne L.R."/>
            <person name="Nakabayashi K."/>
            <person name="Herbrick J.-A."/>
            <person name="Carson A.R."/>
            <person name="Parker-Katiraee L."/>
            <person name="Skaug J."/>
            <person name="Khaja R."/>
            <person name="Zhang J."/>
            <person name="Hudek A.K."/>
            <person name="Li M."/>
            <person name="Haddad M."/>
            <person name="Duggan G.E."/>
            <person name="Fernandez B.A."/>
            <person name="Kanematsu E."/>
            <person name="Gentles S."/>
            <person name="Christopoulos C.C."/>
            <person name="Choufani S."/>
            <person name="Kwasnicka D."/>
            <person name="Zheng X.H."/>
            <person name="Lai Z."/>
            <person name="Nusskern D.R."/>
            <person name="Zhang Q."/>
            <person name="Gu Z."/>
            <person name="Lu F."/>
            <person name="Zeesman S."/>
            <person name="Nowaczyk M.J."/>
            <person name="Teshima I."/>
            <person name="Chitayat D."/>
            <person name="Shuman C."/>
            <person name="Weksberg R."/>
            <person name="Zackai E.H."/>
            <person name="Grebe T.A."/>
            <person name="Cox S.R."/>
            <person name="Kirkpatrick S.J."/>
            <person name="Rahman N."/>
            <person name="Friedman J.M."/>
            <person name="Heng H.H.Q."/>
            <person name="Pelicci P.G."/>
            <person name="Lo-Coco F."/>
            <person name="Belloni E."/>
            <person name="Shaffer L.G."/>
            <person name="Pober B."/>
            <person name="Morton C.C."/>
            <person name="Gusella J.F."/>
            <person name="Bruns G.A.P."/>
            <person name="Korf B.R."/>
            <person name="Quade B.J."/>
            <person name="Ligon A.H."/>
            <person name="Ferguson H."/>
            <person name="Higgins A.W."/>
            <person name="Leach N.T."/>
            <person name="Herrick S.R."/>
            <person name="Lemyre E."/>
            <person name="Farra C.G."/>
            <person name="Kim H.-G."/>
            <person name="Summers A.M."/>
            <person name="Gripp K.W."/>
            <person name="Roberts W."/>
            <person name="Szatmari P."/>
            <person name="Winsor E.J.T."/>
            <person name="Grzeschik K.-H."/>
            <person name="Teebi A."/>
            <person name="Minassian B.A."/>
            <person name="Kere J."/>
            <person name="Armengol L."/>
            <person name="Pujana M.A."/>
            <person name="Estivill X."/>
            <person name="Wilson M.D."/>
            <person name="Koop B.F."/>
            <person name="Tosi S."/>
            <person name="Moore G.E."/>
            <person name="Boright A.P."/>
            <person name="Zlotorynski E."/>
            <person name="Kerem B."/>
            <person name="Kroisel P.M."/>
            <person name="Petek E."/>
            <person name="Oscier D.G."/>
            <person name="Mould S.J."/>
            <person name="Doehner H."/>
            <person name="Doehner K."/>
            <person name="Rommens J.M."/>
            <person name="Vincent J.B."/>
            <person name="Venter J.C."/>
            <person name="Li P.W."/>
            <person name="Mural R.J."/>
            <person name="Adams M.D."/>
            <person name="Tsui L.-C."/>
        </authorList>
    </citation>
    <scope>NUCLEOTIDE SEQUENCE [LARGE SCALE GENOMIC DNA]</scope>
</reference>
<reference key="6">
    <citation type="submission" date="2005-09" db="EMBL/GenBank/DDBJ databases">
        <authorList>
            <person name="Mural R.J."/>
            <person name="Istrail S."/>
            <person name="Sutton G.G."/>
            <person name="Florea L."/>
            <person name="Halpern A.L."/>
            <person name="Mobarry C.M."/>
            <person name="Lippert R."/>
            <person name="Walenz B."/>
            <person name="Shatkay H."/>
            <person name="Dew I."/>
            <person name="Miller J.R."/>
            <person name="Flanigan M.J."/>
            <person name="Edwards N.J."/>
            <person name="Bolanos R."/>
            <person name="Fasulo D."/>
            <person name="Halldorsson B.V."/>
            <person name="Hannenhalli S."/>
            <person name="Turner R."/>
            <person name="Yooseph S."/>
            <person name="Lu F."/>
            <person name="Nusskern D.R."/>
            <person name="Shue B.C."/>
            <person name="Zheng X.H."/>
            <person name="Zhong F."/>
            <person name="Delcher A.L."/>
            <person name="Huson D.H."/>
            <person name="Kravitz S.A."/>
            <person name="Mouchard L."/>
            <person name="Reinert K."/>
            <person name="Remington K.A."/>
            <person name="Clark A.G."/>
            <person name="Waterman M.S."/>
            <person name="Eichler E.E."/>
            <person name="Adams M.D."/>
            <person name="Hunkapiller M.W."/>
            <person name="Myers E.W."/>
            <person name="Venter J.C."/>
        </authorList>
    </citation>
    <scope>NUCLEOTIDE SEQUENCE [LARGE SCALE GENOMIC DNA]</scope>
</reference>
<reference key="7">
    <citation type="journal article" date="2004" name="Genome Res.">
        <title>The status, quality, and expansion of the NIH full-length cDNA project: the Mammalian Gene Collection (MGC).</title>
        <authorList>
            <consortium name="The MGC Project Team"/>
        </authorList>
    </citation>
    <scope>NUCLEOTIDE SEQUENCE [LARGE SCALE MRNA] (ISOFORMS 1 AND 2)</scope>
    <source>
        <tissue>Colon</tissue>
        <tissue>Lung</tissue>
        <tissue>Skin</tissue>
    </source>
</reference>
<reference key="8">
    <citation type="journal article" date="1994" name="Nucleic Acids Res.">
        <title>Repression of transcriptional activity at a distance by the evolutionarily conserved KRAB domain present in a subfamily of zinc finger proteins.</title>
        <authorList>
            <person name="Pengue G."/>
            <person name="Calabro V."/>
            <person name="Bartoli P.C."/>
            <person name="Pagliuca A."/>
            <person name="Lania L."/>
        </authorList>
    </citation>
    <scope>NUCLEOTIDE SEQUENCE [MRNA] OF 67-143 (ISOFORM 1/2)</scope>
</reference>
<reference key="9">
    <citation type="journal article" date="2013" name="J. Proteome Res.">
        <title>Toward a comprehensive characterization of a human cancer cell phosphoproteome.</title>
        <authorList>
            <person name="Zhou H."/>
            <person name="Di Palma S."/>
            <person name="Preisinger C."/>
            <person name="Peng M."/>
            <person name="Polat A.N."/>
            <person name="Heck A.J."/>
            <person name="Mohammed S."/>
        </authorList>
    </citation>
    <scope>PHOSPHORYLATION [LARGE SCALE ANALYSIS] AT SER-12</scope>
    <scope>IDENTIFICATION BY MASS SPECTROMETRY [LARGE SCALE ANALYSIS]</scope>
    <source>
        <tissue>Erythroleukemia</tissue>
    </source>
</reference>
<reference key="10">
    <citation type="journal article" date="2017" name="Nat. Struct. Mol. Biol.">
        <title>Site-specific mapping of the human SUMO proteome reveals co-modification with phosphorylation.</title>
        <authorList>
            <person name="Hendriks I.A."/>
            <person name="Lyon D."/>
            <person name="Young C."/>
            <person name="Jensen L.J."/>
            <person name="Vertegaal A.C."/>
            <person name="Nielsen M.L."/>
        </authorList>
    </citation>
    <scope>SUMOYLATION [LARGE SCALE ANALYSIS] AT LYS-40; LYS-203; LYS-228; LYS-254; LYS-282 AND LYS-443</scope>
    <scope>IDENTIFICATION BY MASS SPECTROMETRY [LARGE SCALE ANALYSIS]</scope>
</reference>
<comment type="function">
    <text>May be involved in transcriptional regulation.</text>
</comment>
<comment type="interaction">
    <interactant intactId="EBI-10211248">
        <id>Q53GI3</id>
    </interactant>
    <interactant intactId="EBI-748961">
        <id>O95273</id>
        <label>CCNDBP1</label>
    </interactant>
    <organismsDiffer>false</organismsDiffer>
    <experiments>3</experiments>
</comment>
<comment type="interaction">
    <interactant intactId="EBI-10211248">
        <id>Q53GI3</id>
    </interactant>
    <interactant intactId="EBI-750020">
        <id>P49760</id>
        <label>CLK2</label>
    </interactant>
    <organismsDiffer>false</organismsDiffer>
    <experiments>3</experiments>
</comment>
<comment type="interaction">
    <interactant intactId="EBI-10211248">
        <id>Q53GI3</id>
    </interactant>
    <interactant intactId="EBI-395959">
        <id>Q15287</id>
        <label>RNPS1</label>
    </interactant>
    <organismsDiffer>false</organismsDiffer>
    <experiments>3</experiments>
</comment>
<comment type="interaction">
    <interactant intactId="EBI-10211248">
        <id>Q53GI3</id>
    </interactant>
    <interactant intactId="EBI-745846">
        <id>P57086</id>
        <label>SCAND1</label>
    </interactant>
    <organismsDiffer>false</organismsDiffer>
    <experiments>12</experiments>
</comment>
<comment type="interaction">
    <interactant intactId="EBI-10211248">
        <id>Q53GI3</id>
    </interactant>
    <interactant intactId="EBI-7781767">
        <id>Q9UFB7</id>
        <label>ZBTB47</label>
    </interactant>
    <organismsDiffer>false</organismsDiffer>
    <experiments>3</experiments>
</comment>
<comment type="subcellular location">
    <subcellularLocation>
        <location evidence="3">Nucleus</location>
    </subcellularLocation>
</comment>
<comment type="alternative products">
    <event type="alternative splicing"/>
    <isoform>
        <id>Q53GI3-1</id>
        <name>1</name>
        <sequence type="displayed"/>
    </isoform>
    <isoform>
        <id>Q53GI3-3</id>
        <name>2</name>
        <sequence type="described" ref="VSP_056547 VSP_056548"/>
    </isoform>
</comment>
<comment type="similarity">
    <text evidence="6">Belongs to the krueppel C2H2-type zinc-finger protein family.</text>
</comment>
<feature type="chain" id="PRO_0000047557" description="Zinc finger protein 394">
    <location>
        <begin position="1"/>
        <end position="561"/>
    </location>
</feature>
<feature type="domain" description="SCAN box" evidence="3">
    <location>
        <begin position="64"/>
        <end position="146"/>
    </location>
</feature>
<feature type="domain" description="KRAB" evidence="2">
    <location>
        <begin position="155"/>
        <end position="230"/>
    </location>
</feature>
<feature type="zinc finger region" description="C2H2-type 1" evidence="1">
    <location>
        <begin position="358"/>
        <end position="380"/>
    </location>
</feature>
<feature type="zinc finger region" description="C2H2-type 2" evidence="1">
    <location>
        <begin position="386"/>
        <end position="408"/>
    </location>
</feature>
<feature type="zinc finger region" description="C2H2-type 3" evidence="1">
    <location>
        <begin position="414"/>
        <end position="436"/>
    </location>
</feature>
<feature type="zinc finger region" description="C2H2-type 4" evidence="1">
    <location>
        <begin position="442"/>
        <end position="463"/>
    </location>
</feature>
<feature type="zinc finger region" description="C2H2-type 5" evidence="1">
    <location>
        <begin position="469"/>
        <end position="491"/>
    </location>
</feature>
<feature type="zinc finger region" description="C2H2-type 6" evidence="1">
    <location>
        <begin position="497"/>
        <end position="519"/>
    </location>
</feature>
<feature type="zinc finger region" description="C2H2-type 7" evidence="1">
    <location>
        <begin position="525"/>
        <end position="547"/>
    </location>
</feature>
<feature type="region of interest" description="Disordered" evidence="4">
    <location>
        <begin position="1"/>
        <end position="61"/>
    </location>
</feature>
<feature type="region of interest" description="Disordered" evidence="4">
    <location>
        <begin position="182"/>
        <end position="201"/>
    </location>
</feature>
<feature type="region of interest" description="Disordered" evidence="4">
    <location>
        <begin position="231"/>
        <end position="285"/>
    </location>
</feature>
<feature type="compositionally biased region" description="Basic and acidic residues" evidence="4">
    <location>
        <begin position="237"/>
        <end position="247"/>
    </location>
</feature>
<feature type="compositionally biased region" description="Polar residues" evidence="4">
    <location>
        <begin position="265"/>
        <end position="274"/>
    </location>
</feature>
<feature type="modified residue" description="Phosphoserine" evidence="7">
    <location>
        <position position="12"/>
    </location>
</feature>
<feature type="cross-link" description="Glycyl lysine isopeptide (Lys-Gly) (interchain with G-Cter in SUMO2)" evidence="8">
    <location>
        <position position="40"/>
    </location>
</feature>
<feature type="cross-link" description="Glycyl lysine isopeptide (Lys-Gly) (interchain with G-Cter in SUMO2)" evidence="8">
    <location>
        <position position="203"/>
    </location>
</feature>
<feature type="cross-link" description="Glycyl lysine isopeptide (Lys-Gly) (interchain with G-Cter in SUMO2)" evidence="8">
    <location>
        <position position="228"/>
    </location>
</feature>
<feature type="cross-link" description="Glycyl lysine isopeptide (Lys-Gly) (interchain with G-Cter in SUMO2)" evidence="8">
    <location>
        <position position="254"/>
    </location>
</feature>
<feature type="cross-link" description="Glycyl lysine isopeptide (Lys-Gly) (interchain with G-Cter in SUMO2)" evidence="8">
    <location>
        <position position="282"/>
    </location>
</feature>
<feature type="cross-link" description="Glycyl lysine isopeptide (Lys-Gly) (interchain with G-Cter in SUMO2)" evidence="8">
    <location>
        <position position="443"/>
    </location>
</feature>
<feature type="splice variant" id="VSP_056547" description="In isoform 2." evidence="5">
    <original>GMVTFEDTAV</original>
    <variation>VWKAEWRTKS</variation>
    <location>
        <begin position="153"/>
        <end position="162"/>
    </location>
</feature>
<feature type="splice variant" id="VSP_056548" description="In isoform 2." evidence="5">
    <location>
        <begin position="163"/>
        <end position="561"/>
    </location>
</feature>
<feature type="sequence variant" id="VAR_052816" description="In dbSNP:rs3735454.">
    <original>T</original>
    <variation>M</variation>
    <location>
        <position position="325"/>
    </location>
</feature>
<feature type="sequence conflict" description="In Ref. 2; BAB14021." evidence="6" ref="2">
    <original>S</original>
    <variation>C</variation>
    <location>
        <position position="3"/>
    </location>
</feature>
<feature type="sequence conflict" description="In Ref. 3; BAD96668." evidence="6" ref="3">
    <original>M</original>
    <variation>T</variation>
    <location>
        <position position="21"/>
    </location>
</feature>
<feature type="sequence conflict" description="In Ref. 8." evidence="6" ref="8">
    <original>H</original>
    <variation>Y</variation>
    <location>
        <position position="127"/>
    </location>
</feature>